<reference key="1">
    <citation type="submission" date="2007-05" db="EMBL/GenBank/DDBJ databases">
        <title>Complete sequence of Thermosipho melanesiensis BI429.</title>
        <authorList>
            <consortium name="US DOE Joint Genome Institute"/>
            <person name="Copeland A."/>
            <person name="Lucas S."/>
            <person name="Lapidus A."/>
            <person name="Barry K."/>
            <person name="Glavina del Rio T."/>
            <person name="Dalin E."/>
            <person name="Tice H."/>
            <person name="Pitluck S."/>
            <person name="Chertkov O."/>
            <person name="Brettin T."/>
            <person name="Bruce D."/>
            <person name="Detter J.C."/>
            <person name="Han C."/>
            <person name="Schmutz J."/>
            <person name="Larimer F."/>
            <person name="Land M."/>
            <person name="Hauser L."/>
            <person name="Kyrpides N."/>
            <person name="Mikhailova N."/>
            <person name="Nelson K."/>
            <person name="Gogarten J.P."/>
            <person name="Noll K."/>
            <person name="Richardson P."/>
        </authorList>
    </citation>
    <scope>NUCLEOTIDE SEQUENCE [LARGE SCALE GENOMIC DNA]</scope>
    <source>
        <strain>DSM 12029 / CIP 104789 / BI429</strain>
    </source>
</reference>
<sequence length="400" mass="44406">MAKEKFVRSKPHLNVGTIGHIDHGKTTLTAAITKYLSLFGRADYTPYEQIDKAPEEKERGITINIAHIEYETEKRHYAHIDCPGHADYIKNMITGAAQMDGAILVVAATDGPMPQTREHVLLARQVNVPAMIVFINKTDMVDDEELVDLVEMEVRELLNKYEFPGDDLPVIRGSALKAVEASNDPNDEAYAPIKELLDTMDEYFPEPQRETDKPFLMPVEDVFSITGRGTVVTGRIERGVIRPGDEVEIVGMSYEVNKTVVTSVEMFRKILDEGLAGDNVGCLLRGIDKDEVERGQVLAKPGSITPHTTFKAQVYVLKKEEGGRHTPFQKGYKPQFFIRTADVTGELIEFPAGVEMVMPGDNVEMTIKLIYPVAIEEGMRFAIREGGRTVGAGVVTAIVE</sequence>
<keyword id="KW-0963">Cytoplasm</keyword>
<keyword id="KW-0251">Elongation factor</keyword>
<keyword id="KW-0342">GTP-binding</keyword>
<keyword id="KW-0378">Hydrolase</keyword>
<keyword id="KW-0460">Magnesium</keyword>
<keyword id="KW-0479">Metal-binding</keyword>
<keyword id="KW-0547">Nucleotide-binding</keyword>
<keyword id="KW-0648">Protein biosynthesis</keyword>
<dbReference type="EC" id="3.6.5.3" evidence="2"/>
<dbReference type="EMBL" id="CP000716">
    <property type="protein sequence ID" value="ABR30812.1"/>
    <property type="molecule type" value="Genomic_DNA"/>
</dbReference>
<dbReference type="RefSeq" id="WP_012057173.1">
    <property type="nucleotide sequence ID" value="NC_009616.1"/>
</dbReference>
<dbReference type="SMR" id="A6LLL1"/>
<dbReference type="STRING" id="391009.Tmel_0951"/>
<dbReference type="KEGG" id="tme:Tmel_0951"/>
<dbReference type="eggNOG" id="COG0050">
    <property type="taxonomic scope" value="Bacteria"/>
</dbReference>
<dbReference type="HOGENOM" id="CLU_007265_0_1_0"/>
<dbReference type="OrthoDB" id="9804504at2"/>
<dbReference type="Proteomes" id="UP000001110">
    <property type="component" value="Chromosome"/>
</dbReference>
<dbReference type="GO" id="GO:0005829">
    <property type="term" value="C:cytosol"/>
    <property type="evidence" value="ECO:0007669"/>
    <property type="project" value="TreeGrafter"/>
</dbReference>
<dbReference type="GO" id="GO:0005525">
    <property type="term" value="F:GTP binding"/>
    <property type="evidence" value="ECO:0007669"/>
    <property type="project" value="UniProtKB-UniRule"/>
</dbReference>
<dbReference type="GO" id="GO:0003924">
    <property type="term" value="F:GTPase activity"/>
    <property type="evidence" value="ECO:0007669"/>
    <property type="project" value="InterPro"/>
</dbReference>
<dbReference type="GO" id="GO:0003746">
    <property type="term" value="F:translation elongation factor activity"/>
    <property type="evidence" value="ECO:0007669"/>
    <property type="project" value="UniProtKB-UniRule"/>
</dbReference>
<dbReference type="CDD" id="cd01884">
    <property type="entry name" value="EF_Tu"/>
    <property type="match status" value="1"/>
</dbReference>
<dbReference type="CDD" id="cd03697">
    <property type="entry name" value="EFTU_II"/>
    <property type="match status" value="1"/>
</dbReference>
<dbReference type="CDD" id="cd03707">
    <property type="entry name" value="EFTU_III"/>
    <property type="match status" value="1"/>
</dbReference>
<dbReference type="FunFam" id="2.40.30.10:FF:000001">
    <property type="entry name" value="Elongation factor Tu"/>
    <property type="match status" value="1"/>
</dbReference>
<dbReference type="FunFam" id="3.40.50.300:FF:000003">
    <property type="entry name" value="Elongation factor Tu"/>
    <property type="match status" value="1"/>
</dbReference>
<dbReference type="Gene3D" id="3.40.50.300">
    <property type="entry name" value="P-loop containing nucleotide triphosphate hydrolases"/>
    <property type="match status" value="1"/>
</dbReference>
<dbReference type="Gene3D" id="2.40.30.10">
    <property type="entry name" value="Translation factors"/>
    <property type="match status" value="2"/>
</dbReference>
<dbReference type="HAMAP" id="MF_00118_B">
    <property type="entry name" value="EF_Tu_B"/>
    <property type="match status" value="1"/>
</dbReference>
<dbReference type="InterPro" id="IPR041709">
    <property type="entry name" value="EF-Tu_GTP-bd"/>
</dbReference>
<dbReference type="InterPro" id="IPR050055">
    <property type="entry name" value="EF-Tu_GTPase"/>
</dbReference>
<dbReference type="InterPro" id="IPR004161">
    <property type="entry name" value="EFTu-like_2"/>
</dbReference>
<dbReference type="InterPro" id="IPR033720">
    <property type="entry name" value="EFTU_2"/>
</dbReference>
<dbReference type="InterPro" id="IPR031157">
    <property type="entry name" value="G_TR_CS"/>
</dbReference>
<dbReference type="InterPro" id="IPR027417">
    <property type="entry name" value="P-loop_NTPase"/>
</dbReference>
<dbReference type="InterPro" id="IPR005225">
    <property type="entry name" value="Small_GTP-bd"/>
</dbReference>
<dbReference type="InterPro" id="IPR000795">
    <property type="entry name" value="T_Tr_GTP-bd_dom"/>
</dbReference>
<dbReference type="InterPro" id="IPR009000">
    <property type="entry name" value="Transl_B-barrel_sf"/>
</dbReference>
<dbReference type="InterPro" id="IPR009001">
    <property type="entry name" value="Transl_elong_EF1A/Init_IF2_C"/>
</dbReference>
<dbReference type="InterPro" id="IPR004541">
    <property type="entry name" value="Transl_elong_EFTu/EF1A_bac/org"/>
</dbReference>
<dbReference type="InterPro" id="IPR004160">
    <property type="entry name" value="Transl_elong_EFTu/EF1A_C"/>
</dbReference>
<dbReference type="NCBIfam" id="TIGR00485">
    <property type="entry name" value="EF-Tu"/>
    <property type="match status" value="1"/>
</dbReference>
<dbReference type="NCBIfam" id="NF000766">
    <property type="entry name" value="PRK00049.1"/>
    <property type="match status" value="1"/>
</dbReference>
<dbReference type="NCBIfam" id="NF009372">
    <property type="entry name" value="PRK12735.1"/>
    <property type="match status" value="1"/>
</dbReference>
<dbReference type="NCBIfam" id="NF009373">
    <property type="entry name" value="PRK12736.1"/>
    <property type="match status" value="1"/>
</dbReference>
<dbReference type="NCBIfam" id="TIGR00231">
    <property type="entry name" value="small_GTP"/>
    <property type="match status" value="1"/>
</dbReference>
<dbReference type="PANTHER" id="PTHR43721:SF22">
    <property type="entry name" value="ELONGATION FACTOR TU, MITOCHONDRIAL"/>
    <property type="match status" value="1"/>
</dbReference>
<dbReference type="PANTHER" id="PTHR43721">
    <property type="entry name" value="ELONGATION FACTOR TU-RELATED"/>
    <property type="match status" value="1"/>
</dbReference>
<dbReference type="Pfam" id="PF00009">
    <property type="entry name" value="GTP_EFTU"/>
    <property type="match status" value="1"/>
</dbReference>
<dbReference type="Pfam" id="PF03144">
    <property type="entry name" value="GTP_EFTU_D2"/>
    <property type="match status" value="1"/>
</dbReference>
<dbReference type="Pfam" id="PF03143">
    <property type="entry name" value="GTP_EFTU_D3"/>
    <property type="match status" value="1"/>
</dbReference>
<dbReference type="PRINTS" id="PR00315">
    <property type="entry name" value="ELONGATNFCT"/>
</dbReference>
<dbReference type="SUPFAM" id="SSF50465">
    <property type="entry name" value="EF-Tu/eEF-1alpha/eIF2-gamma C-terminal domain"/>
    <property type="match status" value="1"/>
</dbReference>
<dbReference type="SUPFAM" id="SSF52540">
    <property type="entry name" value="P-loop containing nucleoside triphosphate hydrolases"/>
    <property type="match status" value="1"/>
</dbReference>
<dbReference type="SUPFAM" id="SSF50447">
    <property type="entry name" value="Translation proteins"/>
    <property type="match status" value="1"/>
</dbReference>
<dbReference type="PROSITE" id="PS00301">
    <property type="entry name" value="G_TR_1"/>
    <property type="match status" value="1"/>
</dbReference>
<dbReference type="PROSITE" id="PS51722">
    <property type="entry name" value="G_TR_2"/>
    <property type="match status" value="1"/>
</dbReference>
<accession>A6LLL1</accession>
<evidence type="ECO:0000250" key="1"/>
<evidence type="ECO:0000255" key="2">
    <source>
        <dbReference type="HAMAP-Rule" id="MF_00118"/>
    </source>
</evidence>
<protein>
    <recommendedName>
        <fullName evidence="2">Elongation factor Tu</fullName>
        <shortName evidence="2">EF-Tu</shortName>
        <ecNumber evidence="2">3.6.5.3</ecNumber>
    </recommendedName>
</protein>
<name>EFTU_THEM4</name>
<gene>
    <name evidence="2" type="primary">tuf</name>
    <name type="ordered locus">Tmel_0951</name>
</gene>
<organism>
    <name type="scientific">Thermosipho melanesiensis (strain DSM 12029 / CIP 104789 / BI429)</name>
    <dbReference type="NCBI Taxonomy" id="391009"/>
    <lineage>
        <taxon>Bacteria</taxon>
        <taxon>Thermotogati</taxon>
        <taxon>Thermotogota</taxon>
        <taxon>Thermotogae</taxon>
        <taxon>Thermotogales</taxon>
        <taxon>Fervidobacteriaceae</taxon>
        <taxon>Thermosipho</taxon>
    </lineage>
</organism>
<feature type="chain" id="PRO_1000015777" description="Elongation factor Tu">
    <location>
        <begin position="1"/>
        <end position="400"/>
    </location>
</feature>
<feature type="domain" description="tr-type G">
    <location>
        <begin position="10"/>
        <end position="208"/>
    </location>
</feature>
<feature type="region of interest" description="G1" evidence="1">
    <location>
        <begin position="19"/>
        <end position="26"/>
    </location>
</feature>
<feature type="region of interest" description="G2" evidence="1">
    <location>
        <begin position="60"/>
        <end position="64"/>
    </location>
</feature>
<feature type="region of interest" description="G3" evidence="1">
    <location>
        <begin position="81"/>
        <end position="84"/>
    </location>
</feature>
<feature type="region of interest" description="G4" evidence="1">
    <location>
        <begin position="136"/>
        <end position="139"/>
    </location>
</feature>
<feature type="region of interest" description="G5" evidence="1">
    <location>
        <begin position="174"/>
        <end position="176"/>
    </location>
</feature>
<feature type="binding site" evidence="2">
    <location>
        <begin position="19"/>
        <end position="26"/>
    </location>
    <ligand>
        <name>GTP</name>
        <dbReference type="ChEBI" id="CHEBI:37565"/>
    </ligand>
</feature>
<feature type="binding site" evidence="2">
    <location>
        <position position="26"/>
    </location>
    <ligand>
        <name>Mg(2+)</name>
        <dbReference type="ChEBI" id="CHEBI:18420"/>
    </ligand>
</feature>
<feature type="binding site" evidence="2">
    <location>
        <begin position="81"/>
        <end position="85"/>
    </location>
    <ligand>
        <name>GTP</name>
        <dbReference type="ChEBI" id="CHEBI:37565"/>
    </ligand>
</feature>
<feature type="binding site" evidence="2">
    <location>
        <begin position="136"/>
        <end position="139"/>
    </location>
    <ligand>
        <name>GTP</name>
        <dbReference type="ChEBI" id="CHEBI:37565"/>
    </ligand>
</feature>
<proteinExistence type="inferred from homology"/>
<comment type="function">
    <text evidence="2">GTP hydrolase that promotes the GTP-dependent binding of aminoacyl-tRNA to the A-site of ribosomes during protein biosynthesis.</text>
</comment>
<comment type="catalytic activity">
    <reaction evidence="2">
        <text>GTP + H2O = GDP + phosphate + H(+)</text>
        <dbReference type="Rhea" id="RHEA:19669"/>
        <dbReference type="ChEBI" id="CHEBI:15377"/>
        <dbReference type="ChEBI" id="CHEBI:15378"/>
        <dbReference type="ChEBI" id="CHEBI:37565"/>
        <dbReference type="ChEBI" id="CHEBI:43474"/>
        <dbReference type="ChEBI" id="CHEBI:58189"/>
        <dbReference type="EC" id="3.6.5.3"/>
    </reaction>
    <physiologicalReaction direction="left-to-right" evidence="2">
        <dbReference type="Rhea" id="RHEA:19670"/>
    </physiologicalReaction>
</comment>
<comment type="subunit">
    <text evidence="2">Monomer.</text>
</comment>
<comment type="subcellular location">
    <subcellularLocation>
        <location evidence="2">Cytoplasm</location>
    </subcellularLocation>
</comment>
<comment type="similarity">
    <text evidence="2">Belongs to the TRAFAC class translation factor GTPase superfamily. Classic translation factor GTPase family. EF-Tu/EF-1A subfamily.</text>
</comment>